<feature type="chain" id="PRO_0000273305" description="Segregation and condensation protein B">
    <location>
        <begin position="1"/>
        <end position="197"/>
    </location>
</feature>
<organism>
    <name type="scientific">Syntrophotalea carbinolica (strain DSM 2380 / NBRC 103641 / GraBd1)</name>
    <name type="common">Pelobacter carbinolicus</name>
    <dbReference type="NCBI Taxonomy" id="338963"/>
    <lineage>
        <taxon>Bacteria</taxon>
        <taxon>Pseudomonadati</taxon>
        <taxon>Thermodesulfobacteriota</taxon>
        <taxon>Desulfuromonadia</taxon>
        <taxon>Desulfuromonadales</taxon>
        <taxon>Syntrophotaleaceae</taxon>
        <taxon>Syntrophotalea</taxon>
    </lineage>
</organism>
<reference key="1">
    <citation type="submission" date="2005-10" db="EMBL/GenBank/DDBJ databases">
        <title>Complete sequence of Pelobacter carbinolicus DSM 2380.</title>
        <authorList>
            <person name="Copeland A."/>
            <person name="Lucas S."/>
            <person name="Lapidus A."/>
            <person name="Barry K."/>
            <person name="Detter J.C."/>
            <person name="Glavina T."/>
            <person name="Hammon N."/>
            <person name="Israni S."/>
            <person name="Pitluck S."/>
            <person name="Chertkov O."/>
            <person name="Schmutz J."/>
            <person name="Larimer F."/>
            <person name="Land M."/>
            <person name="Kyrpides N."/>
            <person name="Ivanova N."/>
            <person name="Richardson P."/>
        </authorList>
    </citation>
    <scope>NUCLEOTIDE SEQUENCE [LARGE SCALE GENOMIC DNA]</scope>
    <source>
        <strain>DSM 2380 / NBRC 103641 / GraBd1</strain>
    </source>
</reference>
<name>SCPB_SYNC1</name>
<gene>
    <name evidence="1" type="primary">scpB</name>
    <name type="ordered locus">Pcar_1300</name>
</gene>
<sequence length="197" mass="21621">MDTVELKAIIEALLFAAPGPVRLEQLALAADADPARVAPLLAELETEYLRAGRGFVLVELAEGYQLRTRPEHAEWVRRLHSSRPTRLSRAALEALAIIAYQQPVTRADIDYLRGVDSGGVVKSLLDKRLVRIVGKKDVPGRPLLYGTSREFLEFFGLRSLSDLPTLKEFTELTKESESLLFDFDAGAGGATASSEQA</sequence>
<keyword id="KW-0131">Cell cycle</keyword>
<keyword id="KW-0132">Cell division</keyword>
<keyword id="KW-0159">Chromosome partition</keyword>
<keyword id="KW-0963">Cytoplasm</keyword>
<keyword id="KW-1185">Reference proteome</keyword>
<accession>Q3A508</accession>
<evidence type="ECO:0000255" key="1">
    <source>
        <dbReference type="HAMAP-Rule" id="MF_01804"/>
    </source>
</evidence>
<dbReference type="EMBL" id="CP000142">
    <property type="protein sequence ID" value="ABA88549.2"/>
    <property type="molecule type" value="Genomic_DNA"/>
</dbReference>
<dbReference type="SMR" id="Q3A508"/>
<dbReference type="STRING" id="338963.Pcar_1300"/>
<dbReference type="KEGG" id="pca:Pcar_1300"/>
<dbReference type="eggNOG" id="COG1386">
    <property type="taxonomic scope" value="Bacteria"/>
</dbReference>
<dbReference type="HOGENOM" id="CLU_045647_5_3_7"/>
<dbReference type="OrthoDB" id="9806226at2"/>
<dbReference type="Proteomes" id="UP000002534">
    <property type="component" value="Chromosome"/>
</dbReference>
<dbReference type="GO" id="GO:0005737">
    <property type="term" value="C:cytoplasm"/>
    <property type="evidence" value="ECO:0007669"/>
    <property type="project" value="UniProtKB-SubCell"/>
</dbReference>
<dbReference type="GO" id="GO:0051301">
    <property type="term" value="P:cell division"/>
    <property type="evidence" value="ECO:0007669"/>
    <property type="project" value="UniProtKB-KW"/>
</dbReference>
<dbReference type="GO" id="GO:0051304">
    <property type="term" value="P:chromosome separation"/>
    <property type="evidence" value="ECO:0007669"/>
    <property type="project" value="InterPro"/>
</dbReference>
<dbReference type="GO" id="GO:0006260">
    <property type="term" value="P:DNA replication"/>
    <property type="evidence" value="ECO:0007669"/>
    <property type="project" value="UniProtKB-UniRule"/>
</dbReference>
<dbReference type="Gene3D" id="1.10.10.10">
    <property type="entry name" value="Winged helix-like DNA-binding domain superfamily/Winged helix DNA-binding domain"/>
    <property type="match status" value="2"/>
</dbReference>
<dbReference type="HAMAP" id="MF_01804">
    <property type="entry name" value="ScpB"/>
    <property type="match status" value="1"/>
</dbReference>
<dbReference type="InterPro" id="IPR005234">
    <property type="entry name" value="ScpB_csome_segregation"/>
</dbReference>
<dbReference type="InterPro" id="IPR036388">
    <property type="entry name" value="WH-like_DNA-bd_sf"/>
</dbReference>
<dbReference type="InterPro" id="IPR036390">
    <property type="entry name" value="WH_DNA-bd_sf"/>
</dbReference>
<dbReference type="NCBIfam" id="TIGR00281">
    <property type="entry name" value="SMC-Scp complex subunit ScpB"/>
    <property type="match status" value="1"/>
</dbReference>
<dbReference type="PANTHER" id="PTHR34298">
    <property type="entry name" value="SEGREGATION AND CONDENSATION PROTEIN B"/>
    <property type="match status" value="1"/>
</dbReference>
<dbReference type="PANTHER" id="PTHR34298:SF2">
    <property type="entry name" value="SEGREGATION AND CONDENSATION PROTEIN B"/>
    <property type="match status" value="1"/>
</dbReference>
<dbReference type="Pfam" id="PF04079">
    <property type="entry name" value="SMC_ScpB"/>
    <property type="match status" value="1"/>
</dbReference>
<dbReference type="PIRSF" id="PIRSF019345">
    <property type="entry name" value="ScpB"/>
    <property type="match status" value="1"/>
</dbReference>
<dbReference type="SUPFAM" id="SSF46785">
    <property type="entry name" value="Winged helix' DNA-binding domain"/>
    <property type="match status" value="2"/>
</dbReference>
<protein>
    <recommendedName>
        <fullName evidence="1">Segregation and condensation protein B</fullName>
    </recommendedName>
</protein>
<comment type="function">
    <text evidence="1">Participates in chromosomal partition during cell division. May act via the formation of a condensin-like complex containing Smc and ScpA that pull DNA away from mid-cell into both cell halves.</text>
</comment>
<comment type="subunit">
    <text evidence="1">Homodimer. Homodimerization may be required to stabilize the binding of ScpA to the Smc head domains. Component of a cohesin-like complex composed of ScpA, ScpB and the Smc homodimer, in which ScpA and ScpB bind to the head domain of Smc. The presence of the three proteins is required for the association of the complex with DNA.</text>
</comment>
<comment type="subcellular location">
    <subcellularLocation>
        <location evidence="1">Cytoplasm</location>
    </subcellularLocation>
    <text evidence="1">Associated with two foci at the outer edges of the nucleoid region in young cells, and at four foci within both cell halves in older cells.</text>
</comment>
<comment type="similarity">
    <text evidence="1">Belongs to the ScpB family.</text>
</comment>
<proteinExistence type="inferred from homology"/>